<keyword id="KW-0687">Ribonucleoprotein</keyword>
<keyword id="KW-0689">Ribosomal protein</keyword>
<protein>
    <recommendedName>
        <fullName evidence="1">Small ribosomal subunit protein bS16</fullName>
    </recommendedName>
    <alternativeName>
        <fullName evidence="2">30S ribosomal protein S16</fullName>
    </alternativeName>
</protein>
<organism>
    <name type="scientific">Lactobacillus delbrueckii subsp. bulgaricus (strain ATCC BAA-365 / Lb-18)</name>
    <dbReference type="NCBI Taxonomy" id="321956"/>
    <lineage>
        <taxon>Bacteria</taxon>
        <taxon>Bacillati</taxon>
        <taxon>Bacillota</taxon>
        <taxon>Bacilli</taxon>
        <taxon>Lactobacillales</taxon>
        <taxon>Lactobacillaceae</taxon>
        <taxon>Lactobacillus</taxon>
    </lineage>
</organism>
<sequence>MSVKIRMRRMGAKRKPFYRIVVADSRAPRDGRFIEEVGYYNPVSQPKELKLDEDKIFEWLKKGAQPSDTVRSFLSSAGLMAKLHDEKYNK</sequence>
<evidence type="ECO:0000255" key="1">
    <source>
        <dbReference type="HAMAP-Rule" id="MF_00385"/>
    </source>
</evidence>
<evidence type="ECO:0000305" key="2"/>
<dbReference type="EMBL" id="CP000412">
    <property type="protein sequence ID" value="ABJ58806.1"/>
    <property type="molecule type" value="Genomic_DNA"/>
</dbReference>
<dbReference type="RefSeq" id="WP_011544017.1">
    <property type="nucleotide sequence ID" value="NC_008529.1"/>
</dbReference>
<dbReference type="SMR" id="Q049R6"/>
<dbReference type="KEGG" id="lbu:LBUL_1281"/>
<dbReference type="HOGENOM" id="CLU_100590_5_0_9"/>
<dbReference type="BioCyc" id="LDEL321956:LBUL_RS06020-MONOMER"/>
<dbReference type="GO" id="GO:0005737">
    <property type="term" value="C:cytoplasm"/>
    <property type="evidence" value="ECO:0007669"/>
    <property type="project" value="UniProtKB-ARBA"/>
</dbReference>
<dbReference type="GO" id="GO:0015935">
    <property type="term" value="C:small ribosomal subunit"/>
    <property type="evidence" value="ECO:0007669"/>
    <property type="project" value="TreeGrafter"/>
</dbReference>
<dbReference type="GO" id="GO:0003735">
    <property type="term" value="F:structural constituent of ribosome"/>
    <property type="evidence" value="ECO:0007669"/>
    <property type="project" value="InterPro"/>
</dbReference>
<dbReference type="GO" id="GO:0006412">
    <property type="term" value="P:translation"/>
    <property type="evidence" value="ECO:0007669"/>
    <property type="project" value="UniProtKB-UniRule"/>
</dbReference>
<dbReference type="FunFam" id="3.30.1320.10:FF:000002">
    <property type="entry name" value="30S ribosomal protein S16"/>
    <property type="match status" value="1"/>
</dbReference>
<dbReference type="Gene3D" id="3.30.1320.10">
    <property type="match status" value="1"/>
</dbReference>
<dbReference type="HAMAP" id="MF_00385">
    <property type="entry name" value="Ribosomal_bS16"/>
    <property type="match status" value="1"/>
</dbReference>
<dbReference type="InterPro" id="IPR000307">
    <property type="entry name" value="Ribosomal_bS16"/>
</dbReference>
<dbReference type="InterPro" id="IPR023803">
    <property type="entry name" value="Ribosomal_bS16_dom_sf"/>
</dbReference>
<dbReference type="NCBIfam" id="TIGR00002">
    <property type="entry name" value="S16"/>
    <property type="match status" value="1"/>
</dbReference>
<dbReference type="PANTHER" id="PTHR12919">
    <property type="entry name" value="30S RIBOSOMAL PROTEIN S16"/>
    <property type="match status" value="1"/>
</dbReference>
<dbReference type="PANTHER" id="PTHR12919:SF20">
    <property type="entry name" value="SMALL RIBOSOMAL SUBUNIT PROTEIN BS16M"/>
    <property type="match status" value="1"/>
</dbReference>
<dbReference type="Pfam" id="PF00886">
    <property type="entry name" value="Ribosomal_S16"/>
    <property type="match status" value="1"/>
</dbReference>
<dbReference type="SUPFAM" id="SSF54565">
    <property type="entry name" value="Ribosomal protein S16"/>
    <property type="match status" value="1"/>
</dbReference>
<feature type="chain" id="PRO_1000049275" description="Small ribosomal subunit protein bS16">
    <location>
        <begin position="1"/>
        <end position="90"/>
    </location>
</feature>
<comment type="similarity">
    <text evidence="1">Belongs to the bacterial ribosomal protein bS16 family.</text>
</comment>
<accession>Q049R6</accession>
<name>RS16_LACDB</name>
<proteinExistence type="inferred from homology"/>
<gene>
    <name evidence="1" type="primary">rpsP</name>
    <name type="ordered locus">LBUL_1281</name>
</gene>
<reference key="1">
    <citation type="journal article" date="2006" name="Proc. Natl. Acad. Sci. U.S.A.">
        <title>Comparative genomics of the lactic acid bacteria.</title>
        <authorList>
            <person name="Makarova K.S."/>
            <person name="Slesarev A."/>
            <person name="Wolf Y.I."/>
            <person name="Sorokin A."/>
            <person name="Mirkin B."/>
            <person name="Koonin E.V."/>
            <person name="Pavlov A."/>
            <person name="Pavlova N."/>
            <person name="Karamychev V."/>
            <person name="Polouchine N."/>
            <person name="Shakhova V."/>
            <person name="Grigoriev I."/>
            <person name="Lou Y."/>
            <person name="Rohksar D."/>
            <person name="Lucas S."/>
            <person name="Huang K."/>
            <person name="Goodstein D.M."/>
            <person name="Hawkins T."/>
            <person name="Plengvidhya V."/>
            <person name="Welker D."/>
            <person name="Hughes J."/>
            <person name="Goh Y."/>
            <person name="Benson A."/>
            <person name="Baldwin K."/>
            <person name="Lee J.-H."/>
            <person name="Diaz-Muniz I."/>
            <person name="Dosti B."/>
            <person name="Smeianov V."/>
            <person name="Wechter W."/>
            <person name="Barabote R."/>
            <person name="Lorca G."/>
            <person name="Altermann E."/>
            <person name="Barrangou R."/>
            <person name="Ganesan B."/>
            <person name="Xie Y."/>
            <person name="Rawsthorne H."/>
            <person name="Tamir D."/>
            <person name="Parker C."/>
            <person name="Breidt F."/>
            <person name="Broadbent J.R."/>
            <person name="Hutkins R."/>
            <person name="O'Sullivan D."/>
            <person name="Steele J."/>
            <person name="Unlu G."/>
            <person name="Saier M.H. Jr."/>
            <person name="Klaenhammer T."/>
            <person name="Richardson P."/>
            <person name="Kozyavkin S."/>
            <person name="Weimer B.C."/>
            <person name="Mills D.A."/>
        </authorList>
    </citation>
    <scope>NUCLEOTIDE SEQUENCE [LARGE SCALE GENOMIC DNA]</scope>
    <source>
        <strain>ATCC BAA-365 / Lb-18</strain>
    </source>
</reference>